<evidence type="ECO:0000255" key="1">
    <source>
        <dbReference type="HAMAP-Rule" id="MF_00547"/>
    </source>
</evidence>
<evidence type="ECO:0000305" key="2"/>
<name>RL37_META3</name>
<feature type="chain" id="PRO_1000017759" description="Large ribosomal subunit protein eL37">
    <location>
        <begin position="1"/>
        <end position="62"/>
    </location>
</feature>
<feature type="zinc finger region" description="C4-type" evidence="1">
    <location>
        <begin position="20"/>
        <end position="38"/>
    </location>
</feature>
<feature type="binding site" evidence="1">
    <location>
        <position position="20"/>
    </location>
    <ligand>
        <name>Zn(2+)</name>
        <dbReference type="ChEBI" id="CHEBI:29105"/>
    </ligand>
</feature>
<feature type="binding site" evidence="1">
    <location>
        <position position="23"/>
    </location>
    <ligand>
        <name>Zn(2+)</name>
        <dbReference type="ChEBI" id="CHEBI:29105"/>
    </ligand>
</feature>
<feature type="binding site" evidence="1">
    <location>
        <position position="35"/>
    </location>
    <ligand>
        <name>Zn(2+)</name>
        <dbReference type="ChEBI" id="CHEBI:29105"/>
    </ligand>
</feature>
<feature type="binding site" evidence="1">
    <location>
        <position position="38"/>
    </location>
    <ligand>
        <name>Zn(2+)</name>
        <dbReference type="ChEBI" id="CHEBI:29105"/>
    </ligand>
</feature>
<comment type="function">
    <text evidence="1">Binds to the 23S rRNA.</text>
</comment>
<comment type="cofactor">
    <cofactor evidence="1">
        <name>Zn(2+)</name>
        <dbReference type="ChEBI" id="CHEBI:29105"/>
    </cofactor>
    <text evidence="1">Binds 1 zinc ion per subunit.</text>
</comment>
<comment type="similarity">
    <text evidence="1">Belongs to the eukaryotic ribosomal protein eL37 family.</text>
</comment>
<proteinExistence type="inferred from homology"/>
<accession>A6UTQ8</accession>
<reference key="1">
    <citation type="submission" date="2007-06" db="EMBL/GenBank/DDBJ databases">
        <title>Complete sequence of Methanococcus aeolicus Nankai-3.</title>
        <authorList>
            <consortium name="US DOE Joint Genome Institute"/>
            <person name="Copeland A."/>
            <person name="Lucas S."/>
            <person name="Lapidus A."/>
            <person name="Barry K."/>
            <person name="Glavina del Rio T."/>
            <person name="Dalin E."/>
            <person name="Tice H."/>
            <person name="Pitluck S."/>
            <person name="Chain P."/>
            <person name="Malfatti S."/>
            <person name="Shin M."/>
            <person name="Vergez L."/>
            <person name="Schmutz J."/>
            <person name="Larimer F."/>
            <person name="Land M."/>
            <person name="Hauser L."/>
            <person name="Kyrpides N."/>
            <person name="Lykidis A."/>
            <person name="Sieprawska-Lupa M."/>
            <person name="Whitman W.B."/>
            <person name="Richardson P."/>
        </authorList>
    </citation>
    <scope>NUCLEOTIDE SEQUENCE [LARGE SCALE GENOMIC DNA]</scope>
    <source>
        <strain>ATCC BAA-1280 / DSM 17508 / OCM 812 / Nankai-3</strain>
    </source>
</reference>
<protein>
    <recommendedName>
        <fullName evidence="1">Large ribosomal subunit protein eL37</fullName>
    </recommendedName>
    <alternativeName>
        <fullName evidence="2">50S ribosomal protein L37e</fullName>
    </alternativeName>
</protein>
<keyword id="KW-0479">Metal-binding</keyword>
<keyword id="KW-0687">Ribonucleoprotein</keyword>
<keyword id="KW-0689">Ribosomal protein</keyword>
<keyword id="KW-0694">RNA-binding</keyword>
<keyword id="KW-0699">rRNA-binding</keyword>
<keyword id="KW-0862">Zinc</keyword>
<keyword id="KW-0863">Zinc-finger</keyword>
<organism>
    <name type="scientific">Methanococcus aeolicus (strain ATCC BAA-1280 / DSM 17508 / OCM 812 / Nankai-3)</name>
    <dbReference type="NCBI Taxonomy" id="419665"/>
    <lineage>
        <taxon>Archaea</taxon>
        <taxon>Methanobacteriati</taxon>
        <taxon>Methanobacteriota</taxon>
        <taxon>Methanomada group</taxon>
        <taxon>Methanococci</taxon>
        <taxon>Methanococcales</taxon>
        <taxon>Methanococcaceae</taxon>
        <taxon>Methanococcus</taxon>
    </lineage>
</organism>
<sequence length="62" mass="7017">MSKGTPSQGKHNKGSNHIICRRCGRRSYHVRKKACSACGFGASKRLKTFAWKNKKINGQRVR</sequence>
<gene>
    <name evidence="1" type="primary">rpl37e</name>
    <name type="ordered locus">Maeo_0291</name>
</gene>
<dbReference type="EMBL" id="CP000743">
    <property type="protein sequence ID" value="ABR55880.1"/>
    <property type="molecule type" value="Genomic_DNA"/>
</dbReference>
<dbReference type="RefSeq" id="WP_011973012.1">
    <property type="nucleotide sequence ID" value="NC_009635.1"/>
</dbReference>
<dbReference type="SMR" id="A6UTQ8"/>
<dbReference type="STRING" id="419665.Maeo_0291"/>
<dbReference type="GeneID" id="5326377"/>
<dbReference type="KEGG" id="mae:Maeo_0291"/>
<dbReference type="eggNOG" id="arCOG04126">
    <property type="taxonomic scope" value="Archaea"/>
</dbReference>
<dbReference type="HOGENOM" id="CLU_208825_0_0_2"/>
<dbReference type="OrthoDB" id="5619at2157"/>
<dbReference type="Proteomes" id="UP000001106">
    <property type="component" value="Chromosome"/>
</dbReference>
<dbReference type="GO" id="GO:0022625">
    <property type="term" value="C:cytosolic large ribosomal subunit"/>
    <property type="evidence" value="ECO:0007669"/>
    <property type="project" value="TreeGrafter"/>
</dbReference>
<dbReference type="GO" id="GO:0019843">
    <property type="term" value="F:rRNA binding"/>
    <property type="evidence" value="ECO:0007669"/>
    <property type="project" value="UniProtKB-KW"/>
</dbReference>
<dbReference type="GO" id="GO:0003735">
    <property type="term" value="F:structural constituent of ribosome"/>
    <property type="evidence" value="ECO:0007669"/>
    <property type="project" value="InterPro"/>
</dbReference>
<dbReference type="GO" id="GO:0008270">
    <property type="term" value="F:zinc ion binding"/>
    <property type="evidence" value="ECO:0007669"/>
    <property type="project" value="UniProtKB-UniRule"/>
</dbReference>
<dbReference type="GO" id="GO:0006412">
    <property type="term" value="P:translation"/>
    <property type="evidence" value="ECO:0007669"/>
    <property type="project" value="UniProtKB-UniRule"/>
</dbReference>
<dbReference type="FunFam" id="2.20.25.30:FF:000003">
    <property type="entry name" value="50S ribosomal protein L37e"/>
    <property type="match status" value="1"/>
</dbReference>
<dbReference type="Gene3D" id="2.20.25.30">
    <property type="match status" value="1"/>
</dbReference>
<dbReference type="HAMAP" id="MF_00547">
    <property type="entry name" value="Ribosomal_eL37"/>
    <property type="match status" value="1"/>
</dbReference>
<dbReference type="InterPro" id="IPR001569">
    <property type="entry name" value="Ribosomal_eL37"/>
</dbReference>
<dbReference type="InterPro" id="IPR011331">
    <property type="entry name" value="Ribosomal_eL37/eL43"/>
</dbReference>
<dbReference type="InterPro" id="IPR018267">
    <property type="entry name" value="Ribosomal_eL37_CS"/>
</dbReference>
<dbReference type="InterPro" id="IPR011332">
    <property type="entry name" value="Ribosomal_zn-bd"/>
</dbReference>
<dbReference type="NCBIfam" id="NF003214">
    <property type="entry name" value="PRK04179.1"/>
    <property type="match status" value="1"/>
</dbReference>
<dbReference type="PANTHER" id="PTHR10768">
    <property type="entry name" value="60S RIBOSOMAL PROTEIN L37"/>
    <property type="match status" value="1"/>
</dbReference>
<dbReference type="PANTHER" id="PTHR10768:SF0">
    <property type="entry name" value="RIBOSOMAL PROTEIN L37"/>
    <property type="match status" value="1"/>
</dbReference>
<dbReference type="Pfam" id="PF01907">
    <property type="entry name" value="Ribosomal_L37e"/>
    <property type="match status" value="1"/>
</dbReference>
<dbReference type="SUPFAM" id="SSF57829">
    <property type="entry name" value="Zn-binding ribosomal proteins"/>
    <property type="match status" value="1"/>
</dbReference>
<dbReference type="PROSITE" id="PS01077">
    <property type="entry name" value="RIBOSOMAL_L37E"/>
    <property type="match status" value="1"/>
</dbReference>